<protein>
    <recommendedName>
        <fullName>Probable cysteine desulfurase, mitochondrial</fullName>
        <ecNumber>2.8.1.7</ecNumber>
    </recommendedName>
</protein>
<feature type="transit peptide" description="Mitochondrion" evidence="5">
    <location>
        <begin position="1"/>
        <end position="52"/>
    </location>
</feature>
<feature type="chain" id="PRO_0000388371" description="Probable cysteine desulfurase, mitochondrial">
    <location>
        <begin position="53"/>
        <end position="450"/>
    </location>
</feature>
<feature type="active site" description="Cysteine persulfide intermediate" evidence="3">
    <location>
        <position position="374"/>
    </location>
</feature>
<feature type="binding site" evidence="4">
    <location>
        <begin position="120"/>
        <end position="121"/>
    </location>
    <ligand>
        <name>pyridoxal 5'-phosphate</name>
        <dbReference type="ChEBI" id="CHEBI:597326"/>
    </ligand>
</feature>
<feature type="binding site" evidence="2">
    <location>
        <position position="200"/>
    </location>
    <ligand>
        <name>pyridoxal 5'-phosphate</name>
        <dbReference type="ChEBI" id="CHEBI:597326"/>
    </ligand>
</feature>
<feature type="binding site" evidence="4">
    <location>
        <position position="228"/>
    </location>
    <ligand>
        <name>pyridoxal 5'-phosphate</name>
        <dbReference type="ChEBI" id="CHEBI:597326"/>
    </ligand>
</feature>
<feature type="binding site" evidence="4">
    <location>
        <begin position="248"/>
        <end position="250"/>
    </location>
    <ligand>
        <name>pyridoxal 5'-phosphate</name>
        <dbReference type="ChEBI" id="CHEBI:597326"/>
    </ligand>
</feature>
<feature type="binding site" evidence="4">
    <location>
        <position position="288"/>
    </location>
    <ligand>
        <name>pyridoxal 5'-phosphate</name>
        <dbReference type="ChEBI" id="CHEBI:597326"/>
    </ligand>
</feature>
<feature type="binding site" description="via persulfide group" evidence="2">
    <location>
        <position position="374"/>
    </location>
    <ligand>
        <name>[2Fe-2S] cluster</name>
        <dbReference type="ChEBI" id="CHEBI:190135"/>
    </ligand>
</feature>
<feature type="modified residue" description="N6-(pyridoxal phosphate)lysine" evidence="4">
    <location>
        <position position="251"/>
    </location>
</feature>
<dbReference type="EC" id="2.8.1.7"/>
<dbReference type="EMBL" id="AAFI02000030">
    <property type="protein sequence ID" value="EAL67792.1"/>
    <property type="molecule type" value="Genomic_DNA"/>
</dbReference>
<dbReference type="RefSeq" id="XP_641773.1">
    <property type="nucleotide sequence ID" value="XM_636681.1"/>
</dbReference>
<dbReference type="SMR" id="Q54X04"/>
<dbReference type="FunCoup" id="Q54X04">
    <property type="interactions" value="916"/>
</dbReference>
<dbReference type="STRING" id="44689.Q54X04"/>
<dbReference type="PaxDb" id="44689-DDB0232198"/>
<dbReference type="EnsemblProtists" id="EAL67792">
    <property type="protein sequence ID" value="EAL67792"/>
    <property type="gene ID" value="DDB_G0279287"/>
</dbReference>
<dbReference type="GeneID" id="8621970"/>
<dbReference type="KEGG" id="ddi:DDB_G0279287"/>
<dbReference type="dictyBase" id="DDB_G0279287"/>
<dbReference type="VEuPathDB" id="AmoebaDB:DDB_G0279287"/>
<dbReference type="eggNOG" id="KOG1549">
    <property type="taxonomic scope" value="Eukaryota"/>
</dbReference>
<dbReference type="HOGENOM" id="CLU_003433_0_2_1"/>
<dbReference type="InParanoid" id="Q54X04"/>
<dbReference type="OMA" id="KGLYWAR"/>
<dbReference type="PhylomeDB" id="Q54X04"/>
<dbReference type="Reactome" id="R-DDI-1362409">
    <property type="pathway name" value="Mitochondrial iron-sulfur cluster biogenesis"/>
</dbReference>
<dbReference type="Reactome" id="R-DDI-947581">
    <property type="pathway name" value="Molybdenum cofactor biosynthesis"/>
</dbReference>
<dbReference type="Reactome" id="R-DDI-9865881">
    <property type="pathway name" value="Complex III assembly"/>
</dbReference>
<dbReference type="PRO" id="PR:Q54X04"/>
<dbReference type="Proteomes" id="UP000002195">
    <property type="component" value="Chromosome 3"/>
</dbReference>
<dbReference type="GO" id="GO:0005829">
    <property type="term" value="C:cytosol"/>
    <property type="evidence" value="ECO:0000250"/>
    <property type="project" value="dictyBase"/>
</dbReference>
<dbReference type="GO" id="GO:1990221">
    <property type="term" value="C:L-cysteine desulfurase complex"/>
    <property type="evidence" value="ECO:0007669"/>
    <property type="project" value="UniProtKB-ARBA"/>
</dbReference>
<dbReference type="GO" id="GO:0005739">
    <property type="term" value="C:mitochondrion"/>
    <property type="evidence" value="ECO:0000250"/>
    <property type="project" value="dictyBase"/>
</dbReference>
<dbReference type="GO" id="GO:0005634">
    <property type="term" value="C:nucleus"/>
    <property type="evidence" value="ECO:0000318"/>
    <property type="project" value="GO_Central"/>
</dbReference>
<dbReference type="GO" id="GO:0031071">
    <property type="term" value="F:cysteine desulfurase activity"/>
    <property type="evidence" value="ECO:0000250"/>
    <property type="project" value="dictyBase"/>
</dbReference>
<dbReference type="GO" id="GO:0051536">
    <property type="term" value="F:iron-sulfur cluster binding"/>
    <property type="evidence" value="ECO:0007669"/>
    <property type="project" value="UniProtKB-KW"/>
</dbReference>
<dbReference type="GO" id="GO:0046872">
    <property type="term" value="F:metal ion binding"/>
    <property type="evidence" value="ECO:0007669"/>
    <property type="project" value="UniProtKB-KW"/>
</dbReference>
<dbReference type="GO" id="GO:0030170">
    <property type="term" value="F:pyridoxal phosphate binding"/>
    <property type="evidence" value="ECO:0007669"/>
    <property type="project" value="InterPro"/>
</dbReference>
<dbReference type="GO" id="GO:0044571">
    <property type="term" value="P:[2Fe-2S] cluster assembly"/>
    <property type="evidence" value="ECO:0007669"/>
    <property type="project" value="InterPro"/>
</dbReference>
<dbReference type="GO" id="GO:0016226">
    <property type="term" value="P:iron-sulfur cluster assembly"/>
    <property type="evidence" value="ECO:0000250"/>
    <property type="project" value="dictyBase"/>
</dbReference>
<dbReference type="FunFam" id="3.40.640.10:FF:000003">
    <property type="entry name" value="Cysteine desulfurase IscS"/>
    <property type="match status" value="1"/>
</dbReference>
<dbReference type="FunFam" id="3.90.1150.10:FF:000002">
    <property type="entry name" value="Cysteine desulfurase IscS"/>
    <property type="match status" value="1"/>
</dbReference>
<dbReference type="Gene3D" id="3.90.1150.10">
    <property type="entry name" value="Aspartate Aminotransferase, domain 1"/>
    <property type="match status" value="1"/>
</dbReference>
<dbReference type="Gene3D" id="3.40.640.10">
    <property type="entry name" value="Type I PLP-dependent aspartate aminotransferase-like (Major domain)"/>
    <property type="match status" value="1"/>
</dbReference>
<dbReference type="HAMAP" id="MF_00331">
    <property type="entry name" value="Cys_desulf_IscS"/>
    <property type="match status" value="1"/>
</dbReference>
<dbReference type="InterPro" id="IPR000192">
    <property type="entry name" value="Aminotrans_V_dom"/>
</dbReference>
<dbReference type="InterPro" id="IPR020578">
    <property type="entry name" value="Aminotrans_V_PyrdxlP_BS"/>
</dbReference>
<dbReference type="InterPro" id="IPR010240">
    <property type="entry name" value="Cys_deSase_IscS"/>
</dbReference>
<dbReference type="InterPro" id="IPR016454">
    <property type="entry name" value="Cysteine_dSase"/>
</dbReference>
<dbReference type="InterPro" id="IPR015424">
    <property type="entry name" value="PyrdxlP-dep_Trfase"/>
</dbReference>
<dbReference type="InterPro" id="IPR015421">
    <property type="entry name" value="PyrdxlP-dep_Trfase_major"/>
</dbReference>
<dbReference type="InterPro" id="IPR015422">
    <property type="entry name" value="PyrdxlP-dep_Trfase_small"/>
</dbReference>
<dbReference type="NCBIfam" id="TIGR02006">
    <property type="entry name" value="IscS"/>
    <property type="match status" value="1"/>
</dbReference>
<dbReference type="NCBIfam" id="NF010611">
    <property type="entry name" value="PRK14012.1"/>
    <property type="match status" value="1"/>
</dbReference>
<dbReference type="PANTHER" id="PTHR11601:SF34">
    <property type="entry name" value="CYSTEINE DESULFURASE"/>
    <property type="match status" value="1"/>
</dbReference>
<dbReference type="PANTHER" id="PTHR11601">
    <property type="entry name" value="CYSTEINE DESULFURYLASE FAMILY MEMBER"/>
    <property type="match status" value="1"/>
</dbReference>
<dbReference type="Pfam" id="PF00266">
    <property type="entry name" value="Aminotran_5"/>
    <property type="match status" value="1"/>
</dbReference>
<dbReference type="PIRSF" id="PIRSF005572">
    <property type="entry name" value="NifS"/>
    <property type="match status" value="1"/>
</dbReference>
<dbReference type="SUPFAM" id="SSF53383">
    <property type="entry name" value="PLP-dependent transferases"/>
    <property type="match status" value="1"/>
</dbReference>
<dbReference type="PROSITE" id="PS00595">
    <property type="entry name" value="AA_TRANSFER_CLASS_5"/>
    <property type="match status" value="1"/>
</dbReference>
<accession>Q54X04</accession>
<sequence length="450" mass="49853">MNRSILKFVKNGIISSSSRINNNGFINKNNNNRWFATLPQPNRGIAGEKQPIYLDMQSTTPIDPRVLDAMLPLYTENYGNPHSKTHAYGWTSNDLVEDAREKVSKIIGADSKEIIFTSGATESGNIAIKGVARFYKEKKNHIITTVTEHKCILDSCRHLEMEGFKVTYLPVGENGLVDLELLKNTITPQTSLVTIMAVNNEIGVVQPIKEIGKICRENGVFFHTDAAQAVGKIPIDVNDMNIDLLSISGHKIYGPKGVGALFVRRRPRVRIEPITTGGGQERGIRSGTVPSTLAVGLGAACDIALKEMNHDAAWVKYLYDRLLKGITDNIPNVKVNGDLNARYYGNLNISFSYVEGESLLMAIKDVACSSGSACTSSSLEPSYVLRSLGVEEDMAHSSIRFGIGRFTTEQEIDYTIEILKKNVQRLRDMSPLWEMVQEGIDIKTIEWSQI</sequence>
<keyword id="KW-0903">Direct protein sequencing</keyword>
<keyword id="KW-0408">Iron</keyword>
<keyword id="KW-0411">Iron-sulfur</keyword>
<keyword id="KW-0479">Metal-binding</keyword>
<keyword id="KW-0496">Mitochondrion</keyword>
<keyword id="KW-0539">Nucleus</keyword>
<keyword id="KW-0663">Pyridoxal phosphate</keyword>
<keyword id="KW-1185">Reference proteome</keyword>
<keyword id="KW-0808">Transferase</keyword>
<keyword id="KW-0809">Transit peptide</keyword>
<organism>
    <name type="scientific">Dictyostelium discoideum</name>
    <name type="common">Social amoeba</name>
    <dbReference type="NCBI Taxonomy" id="44689"/>
    <lineage>
        <taxon>Eukaryota</taxon>
        <taxon>Amoebozoa</taxon>
        <taxon>Evosea</taxon>
        <taxon>Eumycetozoa</taxon>
        <taxon>Dictyostelia</taxon>
        <taxon>Dictyosteliales</taxon>
        <taxon>Dictyosteliaceae</taxon>
        <taxon>Dictyostelium</taxon>
    </lineage>
</organism>
<evidence type="ECO:0000250" key="1"/>
<evidence type="ECO:0000250" key="2">
    <source>
        <dbReference type="UniProtKB" id="O29689"/>
    </source>
</evidence>
<evidence type="ECO:0000250" key="3">
    <source>
        <dbReference type="UniProtKB" id="P0A6B7"/>
    </source>
</evidence>
<evidence type="ECO:0000250" key="4">
    <source>
        <dbReference type="UniProtKB" id="P0A6B9"/>
    </source>
</evidence>
<evidence type="ECO:0000255" key="5"/>
<evidence type="ECO:0000305" key="6"/>
<proteinExistence type="evidence at protein level"/>
<gene>
    <name type="primary">nfs1</name>
    <name type="ORF">DDB_0232198</name>
</gene>
<reference key="1">
    <citation type="journal article" date="2005" name="Nature">
        <title>The genome of the social amoeba Dictyostelium discoideum.</title>
        <authorList>
            <person name="Eichinger L."/>
            <person name="Pachebat J.A."/>
            <person name="Gloeckner G."/>
            <person name="Rajandream M.A."/>
            <person name="Sucgang R."/>
            <person name="Berriman M."/>
            <person name="Song J."/>
            <person name="Olsen R."/>
            <person name="Szafranski K."/>
            <person name="Xu Q."/>
            <person name="Tunggal B."/>
            <person name="Kummerfeld S."/>
            <person name="Madera M."/>
            <person name="Konfortov B.A."/>
            <person name="Rivero F."/>
            <person name="Bankier A.T."/>
            <person name="Lehmann R."/>
            <person name="Hamlin N."/>
            <person name="Davies R."/>
            <person name="Gaudet P."/>
            <person name="Fey P."/>
            <person name="Pilcher K."/>
            <person name="Chen G."/>
            <person name="Saunders D."/>
            <person name="Sodergren E.J."/>
            <person name="Davis P."/>
            <person name="Kerhornou A."/>
            <person name="Nie X."/>
            <person name="Hall N."/>
            <person name="Anjard C."/>
            <person name="Hemphill L."/>
            <person name="Bason N."/>
            <person name="Farbrother P."/>
            <person name="Desany B."/>
            <person name="Just E."/>
            <person name="Morio T."/>
            <person name="Rost R."/>
            <person name="Churcher C.M."/>
            <person name="Cooper J."/>
            <person name="Haydock S."/>
            <person name="van Driessche N."/>
            <person name="Cronin A."/>
            <person name="Goodhead I."/>
            <person name="Muzny D.M."/>
            <person name="Mourier T."/>
            <person name="Pain A."/>
            <person name="Lu M."/>
            <person name="Harper D."/>
            <person name="Lindsay R."/>
            <person name="Hauser H."/>
            <person name="James K.D."/>
            <person name="Quiles M."/>
            <person name="Madan Babu M."/>
            <person name="Saito T."/>
            <person name="Buchrieser C."/>
            <person name="Wardroper A."/>
            <person name="Felder M."/>
            <person name="Thangavelu M."/>
            <person name="Johnson D."/>
            <person name="Knights A."/>
            <person name="Loulseged H."/>
            <person name="Mungall K.L."/>
            <person name="Oliver K."/>
            <person name="Price C."/>
            <person name="Quail M.A."/>
            <person name="Urushihara H."/>
            <person name="Hernandez J."/>
            <person name="Rabbinowitsch E."/>
            <person name="Steffen D."/>
            <person name="Sanders M."/>
            <person name="Ma J."/>
            <person name="Kohara Y."/>
            <person name="Sharp S."/>
            <person name="Simmonds M.N."/>
            <person name="Spiegler S."/>
            <person name="Tivey A."/>
            <person name="Sugano S."/>
            <person name="White B."/>
            <person name="Walker D."/>
            <person name="Woodward J.R."/>
            <person name="Winckler T."/>
            <person name="Tanaka Y."/>
            <person name="Shaulsky G."/>
            <person name="Schleicher M."/>
            <person name="Weinstock G.M."/>
            <person name="Rosenthal A."/>
            <person name="Cox E.C."/>
            <person name="Chisholm R.L."/>
            <person name="Gibbs R.A."/>
            <person name="Loomis W.F."/>
            <person name="Platzer M."/>
            <person name="Kay R.R."/>
            <person name="Williams J.G."/>
            <person name="Dear P.H."/>
            <person name="Noegel A.A."/>
            <person name="Barrell B.G."/>
            <person name="Kuspa A."/>
        </authorList>
    </citation>
    <scope>NUCLEOTIDE SEQUENCE [LARGE SCALE GENOMIC DNA]</scope>
    <source>
        <strain>AX4</strain>
    </source>
</reference>
<reference key="2">
    <citation type="submission" date="2009-07" db="UniProtKB">
        <authorList>
            <person name="Bienvenut W.V."/>
            <person name="Ura S."/>
            <person name="Insall R.H."/>
        </authorList>
    </citation>
    <scope>PROTEIN SEQUENCE OF 44-84; 257-264; 269-282 AND 387-400</scope>
    <scope>IDENTIFICATION BY MASS SPECTROMETRY</scope>
    <source>
        <strain>AX2</strain>
    </source>
</reference>
<name>NFS1_DICDI</name>
<comment type="function">
    <text evidence="1">Catalyzes the removal of elemental sulfur from cysteine to produce alanine. It supplies the inorganic sulfur for iron-sulfur (Fe-S) clusters (By similarity).</text>
</comment>
<comment type="catalytic activity">
    <reaction>
        <text>(sulfur carrier)-H + L-cysteine = (sulfur carrier)-SH + L-alanine</text>
        <dbReference type="Rhea" id="RHEA:43892"/>
        <dbReference type="Rhea" id="RHEA-COMP:14737"/>
        <dbReference type="Rhea" id="RHEA-COMP:14739"/>
        <dbReference type="ChEBI" id="CHEBI:29917"/>
        <dbReference type="ChEBI" id="CHEBI:35235"/>
        <dbReference type="ChEBI" id="CHEBI:57972"/>
        <dbReference type="ChEBI" id="CHEBI:64428"/>
        <dbReference type="EC" id="2.8.1.7"/>
    </reaction>
</comment>
<comment type="cofactor">
    <cofactor evidence="4">
        <name>pyridoxal 5'-phosphate</name>
        <dbReference type="ChEBI" id="CHEBI:597326"/>
    </cofactor>
</comment>
<comment type="subcellular location">
    <subcellularLocation>
        <location evidence="1">Mitochondrion</location>
    </subcellularLocation>
    <subcellularLocation>
        <location evidence="1">Nucleus</location>
    </subcellularLocation>
</comment>
<comment type="similarity">
    <text evidence="6">Belongs to the class-V pyridoxal-phosphate-dependent aminotransferase family. NifS/IscS subfamily.</text>
</comment>